<accession>P28059</accession>
<feature type="chain" id="PRO_0000061903" description="Cytochrome b6-f complex subunit 4">
    <location>
        <begin position="1"/>
        <end position="160"/>
    </location>
</feature>
<feature type="transmembrane region" description="Helical" evidence="1">
    <location>
        <begin position="36"/>
        <end position="56"/>
    </location>
</feature>
<feature type="transmembrane region" description="Helical" evidence="1">
    <location>
        <begin position="95"/>
        <end position="115"/>
    </location>
</feature>
<feature type="transmembrane region" description="Helical" evidence="1">
    <location>
        <begin position="127"/>
        <end position="147"/>
    </location>
</feature>
<evidence type="ECO:0000255" key="1">
    <source>
        <dbReference type="HAMAP-Rule" id="MF_01344"/>
    </source>
</evidence>
<comment type="function">
    <text evidence="1">Component of the cytochrome b6-f complex, which mediates electron transfer between photosystem II (PSII) and photosystem I (PSI), cyclic electron flow around PSI, and state transitions.</text>
</comment>
<comment type="subunit">
    <text evidence="1">The 4 large subunits of the cytochrome b6-f complex are cytochrome b6, subunit IV (17 kDa polypeptide, PetD), cytochrome f and the Rieske protein, while the 4 small subunits are PetG, PetL, PetM and PetN. The complex functions as a dimer.</text>
</comment>
<comment type="subcellular location">
    <subcellularLocation>
        <location evidence="1">Cellular thylakoid membrane</location>
        <topology evidence="1">Multi-pass membrane protein</topology>
    </subcellularLocation>
</comment>
<comment type="similarity">
    <text evidence="1">Belongs to the cytochrome b family. PetD subfamily.</text>
</comment>
<proteinExistence type="inferred from homology"/>
<reference key="1">
    <citation type="journal article" date="1992" name="Plant Mol. Biol.">
        <title>Conserved relationship between psbH and petBD genes: presence of a shared upstream element in Prochlorothrix hollandica.</title>
        <authorList>
            <person name="Greer K.L."/>
            <person name="Golden S.S."/>
        </authorList>
    </citation>
    <scope>NUCLEOTIDE SEQUENCE [GENOMIC DNA]</scope>
</reference>
<keyword id="KW-0249">Electron transport</keyword>
<keyword id="KW-0472">Membrane</keyword>
<keyword id="KW-0602">Photosynthesis</keyword>
<keyword id="KW-0793">Thylakoid</keyword>
<keyword id="KW-0812">Transmembrane</keyword>
<keyword id="KW-1133">Transmembrane helix</keyword>
<keyword id="KW-0813">Transport</keyword>
<protein>
    <recommendedName>
        <fullName evidence="1">Cytochrome b6-f complex subunit 4</fullName>
    </recommendedName>
    <alternativeName>
        <fullName evidence="1">17 kDa polypeptide</fullName>
    </alternativeName>
</protein>
<organism>
    <name type="scientific">Prochlorothrix hollandica</name>
    <dbReference type="NCBI Taxonomy" id="1223"/>
    <lineage>
        <taxon>Bacteria</taxon>
        <taxon>Bacillati</taxon>
        <taxon>Cyanobacteriota</taxon>
        <taxon>Cyanophyceae</taxon>
        <taxon>Prochlorotrichales</taxon>
        <taxon>Prochlorotrichaceae</taxon>
        <taxon>Prochlorothrix</taxon>
    </lineage>
</organism>
<dbReference type="EMBL" id="X60313">
    <property type="protein sequence ID" value="CAA42861.1"/>
    <property type="molecule type" value="Genomic_DNA"/>
</dbReference>
<dbReference type="PIR" id="S22472">
    <property type="entry name" value="S22472"/>
</dbReference>
<dbReference type="RefSeq" id="WP_017713550.1">
    <property type="nucleotide sequence ID" value="NZ_JBEIME010000226.1"/>
</dbReference>
<dbReference type="SMR" id="P28059"/>
<dbReference type="GO" id="GO:0031676">
    <property type="term" value="C:plasma membrane-derived thylakoid membrane"/>
    <property type="evidence" value="ECO:0007669"/>
    <property type="project" value="UniProtKB-SubCell"/>
</dbReference>
<dbReference type="GO" id="GO:0045158">
    <property type="term" value="F:electron transporter, transferring electrons within cytochrome b6/f complex of photosystem II activity"/>
    <property type="evidence" value="ECO:0007669"/>
    <property type="project" value="UniProtKB-UniRule"/>
</dbReference>
<dbReference type="GO" id="GO:0045156">
    <property type="term" value="F:electron transporter, transferring electrons within the cyclic electron transport pathway of photosynthesis activity"/>
    <property type="evidence" value="ECO:0007669"/>
    <property type="project" value="InterPro"/>
</dbReference>
<dbReference type="GO" id="GO:0016491">
    <property type="term" value="F:oxidoreductase activity"/>
    <property type="evidence" value="ECO:0007669"/>
    <property type="project" value="InterPro"/>
</dbReference>
<dbReference type="GO" id="GO:0009767">
    <property type="term" value="P:photosynthetic electron transport chain"/>
    <property type="evidence" value="ECO:0007669"/>
    <property type="project" value="InterPro"/>
</dbReference>
<dbReference type="CDD" id="cd00290">
    <property type="entry name" value="cytochrome_b_C"/>
    <property type="match status" value="1"/>
</dbReference>
<dbReference type="FunFam" id="1.10.287.980:FF:000001">
    <property type="entry name" value="Cytochrome b6-f complex subunit 4"/>
    <property type="match status" value="1"/>
</dbReference>
<dbReference type="FunFam" id="1.20.5.510:FF:000002">
    <property type="entry name" value="Cytochrome b6-f complex subunit 4"/>
    <property type="match status" value="1"/>
</dbReference>
<dbReference type="Gene3D" id="1.10.287.980">
    <property type="entry name" value="plastocyanin oxidoreductase"/>
    <property type="match status" value="1"/>
</dbReference>
<dbReference type="Gene3D" id="1.20.5.510">
    <property type="entry name" value="Single helix bin"/>
    <property type="match status" value="1"/>
</dbReference>
<dbReference type="HAMAP" id="MF_01344">
    <property type="entry name" value="Cytb6_f_subIV"/>
    <property type="match status" value="1"/>
</dbReference>
<dbReference type="InterPro" id="IPR005798">
    <property type="entry name" value="Cyt_b/b6_C"/>
</dbReference>
<dbReference type="InterPro" id="IPR036150">
    <property type="entry name" value="Cyt_b/b6_C_sf"/>
</dbReference>
<dbReference type="InterPro" id="IPR005870">
    <property type="entry name" value="Cyt_b6/f_cplx_suIV"/>
</dbReference>
<dbReference type="InterPro" id="IPR048260">
    <property type="entry name" value="Cytochrome_b_C_euk/bac"/>
</dbReference>
<dbReference type="NCBIfam" id="TIGR01156">
    <property type="entry name" value="cytb6_f_IV"/>
    <property type="match status" value="1"/>
</dbReference>
<dbReference type="PANTHER" id="PTHR19271">
    <property type="entry name" value="CYTOCHROME B"/>
    <property type="match status" value="1"/>
</dbReference>
<dbReference type="PANTHER" id="PTHR19271:SF40">
    <property type="entry name" value="CYTOCHROME B"/>
    <property type="match status" value="1"/>
</dbReference>
<dbReference type="Pfam" id="PF00032">
    <property type="entry name" value="Cytochrom_B_C"/>
    <property type="match status" value="1"/>
</dbReference>
<dbReference type="PIRSF" id="PIRSF000033">
    <property type="entry name" value="B6f_17K"/>
    <property type="match status" value="1"/>
</dbReference>
<dbReference type="SUPFAM" id="SSF81648">
    <property type="entry name" value="a domain/subunit of cytochrome bc1 complex (Ubiquinol-cytochrome c reductase)"/>
    <property type="match status" value="1"/>
</dbReference>
<dbReference type="PROSITE" id="PS51003">
    <property type="entry name" value="CYTB_CTER"/>
    <property type="match status" value="1"/>
</dbReference>
<name>PETD_PROHO</name>
<sequence>MSVLKKPDLTDPVLLEKLAQNMGHNYYGEPAWPNDLLYTFPVVILGTLACVVGLAVLDPAMVGEPANPFATPLEILPEWYLYPAFQILRVVPNKLLGILLQTAIPLGLMLVPFIENINKFQNPFRRPIAMAVFLFGTLVTLWMGVAATLPIDKFFTLGLF</sequence>
<gene>
    <name evidence="1" type="primary">petD</name>
</gene>